<dbReference type="EMBL" id="CP001043">
    <property type="protein sequence ID" value="ACC69807.1"/>
    <property type="molecule type" value="Genomic_DNA"/>
</dbReference>
<dbReference type="RefSeq" id="WP_012400028.1">
    <property type="nucleotide sequence ID" value="NC_010622.1"/>
</dbReference>
<dbReference type="SMR" id="B2JED0"/>
<dbReference type="STRING" id="391038.Bphy_0617"/>
<dbReference type="KEGG" id="bph:Bphy_0617"/>
<dbReference type="eggNOG" id="COG0781">
    <property type="taxonomic scope" value="Bacteria"/>
</dbReference>
<dbReference type="HOGENOM" id="CLU_087843_4_1_4"/>
<dbReference type="OrthoDB" id="9789556at2"/>
<dbReference type="Proteomes" id="UP000001192">
    <property type="component" value="Chromosome 1"/>
</dbReference>
<dbReference type="GO" id="GO:0005829">
    <property type="term" value="C:cytosol"/>
    <property type="evidence" value="ECO:0007669"/>
    <property type="project" value="TreeGrafter"/>
</dbReference>
<dbReference type="GO" id="GO:0003723">
    <property type="term" value="F:RNA binding"/>
    <property type="evidence" value="ECO:0007669"/>
    <property type="project" value="UniProtKB-UniRule"/>
</dbReference>
<dbReference type="GO" id="GO:0006353">
    <property type="term" value="P:DNA-templated transcription termination"/>
    <property type="evidence" value="ECO:0007669"/>
    <property type="project" value="UniProtKB-UniRule"/>
</dbReference>
<dbReference type="GO" id="GO:0031564">
    <property type="term" value="P:transcription antitermination"/>
    <property type="evidence" value="ECO:0007669"/>
    <property type="project" value="UniProtKB-KW"/>
</dbReference>
<dbReference type="Gene3D" id="1.10.940.10">
    <property type="entry name" value="NusB-like"/>
    <property type="match status" value="1"/>
</dbReference>
<dbReference type="HAMAP" id="MF_00073">
    <property type="entry name" value="NusB"/>
    <property type="match status" value="1"/>
</dbReference>
<dbReference type="InterPro" id="IPR035926">
    <property type="entry name" value="NusB-like_sf"/>
</dbReference>
<dbReference type="InterPro" id="IPR011605">
    <property type="entry name" value="NusB_fam"/>
</dbReference>
<dbReference type="InterPro" id="IPR006027">
    <property type="entry name" value="NusB_RsmB_TIM44"/>
</dbReference>
<dbReference type="NCBIfam" id="TIGR01951">
    <property type="entry name" value="nusB"/>
    <property type="match status" value="1"/>
</dbReference>
<dbReference type="PANTHER" id="PTHR11078:SF3">
    <property type="entry name" value="ANTITERMINATION NUSB DOMAIN-CONTAINING PROTEIN"/>
    <property type="match status" value="1"/>
</dbReference>
<dbReference type="PANTHER" id="PTHR11078">
    <property type="entry name" value="N UTILIZATION SUBSTANCE PROTEIN B-RELATED"/>
    <property type="match status" value="1"/>
</dbReference>
<dbReference type="Pfam" id="PF01029">
    <property type="entry name" value="NusB"/>
    <property type="match status" value="1"/>
</dbReference>
<dbReference type="SUPFAM" id="SSF48013">
    <property type="entry name" value="NusB-like"/>
    <property type="match status" value="1"/>
</dbReference>
<evidence type="ECO:0000255" key="1">
    <source>
        <dbReference type="HAMAP-Rule" id="MF_00073"/>
    </source>
</evidence>
<reference key="1">
    <citation type="journal article" date="2014" name="Stand. Genomic Sci.">
        <title>Complete genome sequence of Burkholderia phymatum STM815(T), a broad host range and efficient nitrogen-fixing symbiont of Mimosa species.</title>
        <authorList>
            <person name="Moulin L."/>
            <person name="Klonowska A."/>
            <person name="Caroline B."/>
            <person name="Booth K."/>
            <person name="Vriezen J.A."/>
            <person name="Melkonian R."/>
            <person name="James E.K."/>
            <person name="Young J.P."/>
            <person name="Bena G."/>
            <person name="Hauser L."/>
            <person name="Land M."/>
            <person name="Kyrpides N."/>
            <person name="Bruce D."/>
            <person name="Chain P."/>
            <person name="Copeland A."/>
            <person name="Pitluck S."/>
            <person name="Woyke T."/>
            <person name="Lizotte-Waniewski M."/>
            <person name="Bristow J."/>
            <person name="Riley M."/>
        </authorList>
    </citation>
    <scope>NUCLEOTIDE SEQUENCE [LARGE SCALE GENOMIC DNA]</scope>
    <source>
        <strain>DSM 17167 / CIP 108236 / LMG 21445 / STM815</strain>
    </source>
</reference>
<feature type="chain" id="PRO_1000092533" description="Transcription antitermination protein NusB">
    <location>
        <begin position="1"/>
        <end position="145"/>
    </location>
</feature>
<name>NUSB_PARP8</name>
<protein>
    <recommendedName>
        <fullName evidence="1">Transcription antitermination protein NusB</fullName>
    </recommendedName>
    <alternativeName>
        <fullName evidence="1">Antitermination factor NusB</fullName>
    </alternativeName>
</protein>
<comment type="function">
    <text evidence="1">Involved in transcription antitermination. Required for transcription of ribosomal RNA (rRNA) genes. Binds specifically to the boxA antiterminator sequence of the ribosomal RNA (rrn) operons.</text>
</comment>
<comment type="similarity">
    <text evidence="1">Belongs to the NusB family.</text>
</comment>
<sequence>MKSARRRSRELATQGLYQWLLSGSPAGEIDAQLRGAQGYDKADHEHLDAILHGVIRDSEALSADLAPCLDRPIDQLSPVERAVLLVAAYELKNHIDIPYRVVINEAVELAKTFGGADGYKYVNGVLDKLSAKLRVDETQAAARKQ</sequence>
<organism>
    <name type="scientific">Paraburkholderia phymatum (strain DSM 17167 / CIP 108236 / LMG 21445 / STM815)</name>
    <name type="common">Burkholderia phymatum</name>
    <dbReference type="NCBI Taxonomy" id="391038"/>
    <lineage>
        <taxon>Bacteria</taxon>
        <taxon>Pseudomonadati</taxon>
        <taxon>Pseudomonadota</taxon>
        <taxon>Betaproteobacteria</taxon>
        <taxon>Burkholderiales</taxon>
        <taxon>Burkholderiaceae</taxon>
        <taxon>Paraburkholderia</taxon>
    </lineage>
</organism>
<gene>
    <name evidence="1" type="primary">nusB</name>
    <name type="ordered locus">Bphy_0617</name>
</gene>
<keyword id="KW-1185">Reference proteome</keyword>
<keyword id="KW-0694">RNA-binding</keyword>
<keyword id="KW-0804">Transcription</keyword>
<keyword id="KW-0889">Transcription antitermination</keyword>
<keyword id="KW-0805">Transcription regulation</keyword>
<proteinExistence type="inferred from homology"/>
<accession>B2JED0</accession>